<dbReference type="EC" id="3.6.4.13"/>
<dbReference type="EMBL" id="DS027698">
    <property type="protein sequence ID" value="EAW16333.1"/>
    <property type="molecule type" value="Genomic_DNA"/>
</dbReference>
<dbReference type="RefSeq" id="XP_001258230.1">
    <property type="nucleotide sequence ID" value="XM_001258229.1"/>
</dbReference>
<dbReference type="SMR" id="A1DNG2"/>
<dbReference type="STRING" id="331117.A1DNG2"/>
<dbReference type="EnsemblFungi" id="EAW16333">
    <property type="protein sequence ID" value="EAW16333"/>
    <property type="gene ID" value="NFIA_056820"/>
</dbReference>
<dbReference type="GeneID" id="4584745"/>
<dbReference type="KEGG" id="nfi:NFIA_056820"/>
<dbReference type="VEuPathDB" id="FungiDB:NFIA_056820"/>
<dbReference type="eggNOG" id="KOG0337">
    <property type="taxonomic scope" value="Eukaryota"/>
</dbReference>
<dbReference type="HOGENOM" id="CLU_003041_5_1_1"/>
<dbReference type="OMA" id="EDQFGMM"/>
<dbReference type="OrthoDB" id="10261375at2759"/>
<dbReference type="Proteomes" id="UP000006702">
    <property type="component" value="Unassembled WGS sequence"/>
</dbReference>
<dbReference type="GO" id="GO:0005829">
    <property type="term" value="C:cytosol"/>
    <property type="evidence" value="ECO:0007669"/>
    <property type="project" value="TreeGrafter"/>
</dbReference>
<dbReference type="GO" id="GO:0005730">
    <property type="term" value="C:nucleolus"/>
    <property type="evidence" value="ECO:0007669"/>
    <property type="project" value="UniProtKB-SubCell"/>
</dbReference>
<dbReference type="GO" id="GO:0005524">
    <property type="term" value="F:ATP binding"/>
    <property type="evidence" value="ECO:0007669"/>
    <property type="project" value="UniProtKB-KW"/>
</dbReference>
<dbReference type="GO" id="GO:0016887">
    <property type="term" value="F:ATP hydrolysis activity"/>
    <property type="evidence" value="ECO:0007669"/>
    <property type="project" value="RHEA"/>
</dbReference>
<dbReference type="GO" id="GO:0003723">
    <property type="term" value="F:RNA binding"/>
    <property type="evidence" value="ECO:0007669"/>
    <property type="project" value="UniProtKB-KW"/>
</dbReference>
<dbReference type="GO" id="GO:0003724">
    <property type="term" value="F:RNA helicase activity"/>
    <property type="evidence" value="ECO:0007669"/>
    <property type="project" value="UniProtKB-EC"/>
</dbReference>
<dbReference type="GO" id="GO:0006364">
    <property type="term" value="P:rRNA processing"/>
    <property type="evidence" value="ECO:0007669"/>
    <property type="project" value="UniProtKB-KW"/>
</dbReference>
<dbReference type="CDD" id="cd17959">
    <property type="entry name" value="DEADc_DDX54"/>
    <property type="match status" value="1"/>
</dbReference>
<dbReference type="CDD" id="cd18787">
    <property type="entry name" value="SF2_C_DEAD"/>
    <property type="match status" value="1"/>
</dbReference>
<dbReference type="FunFam" id="3.40.50.300:FF:000865">
    <property type="entry name" value="ATP-dependent RNA helicase DDX54"/>
    <property type="match status" value="1"/>
</dbReference>
<dbReference type="Gene3D" id="3.40.50.300">
    <property type="entry name" value="P-loop containing nucleotide triphosphate hydrolases"/>
    <property type="match status" value="2"/>
</dbReference>
<dbReference type="InterPro" id="IPR012541">
    <property type="entry name" value="DBP10_C"/>
</dbReference>
<dbReference type="InterPro" id="IPR033517">
    <property type="entry name" value="DDX54/DBP10_DEAD-box_helicase"/>
</dbReference>
<dbReference type="InterPro" id="IPR011545">
    <property type="entry name" value="DEAD/DEAH_box_helicase_dom"/>
</dbReference>
<dbReference type="InterPro" id="IPR050079">
    <property type="entry name" value="DEAD_box_RNA_helicase"/>
</dbReference>
<dbReference type="InterPro" id="IPR014001">
    <property type="entry name" value="Helicase_ATP-bd"/>
</dbReference>
<dbReference type="InterPro" id="IPR001650">
    <property type="entry name" value="Helicase_C-like"/>
</dbReference>
<dbReference type="InterPro" id="IPR027417">
    <property type="entry name" value="P-loop_NTPase"/>
</dbReference>
<dbReference type="InterPro" id="IPR000629">
    <property type="entry name" value="RNA-helicase_DEAD-box_CS"/>
</dbReference>
<dbReference type="InterPro" id="IPR014014">
    <property type="entry name" value="RNA_helicase_DEAD_Q_motif"/>
</dbReference>
<dbReference type="PANTHER" id="PTHR47959">
    <property type="entry name" value="ATP-DEPENDENT RNA HELICASE RHLE-RELATED"/>
    <property type="match status" value="1"/>
</dbReference>
<dbReference type="PANTHER" id="PTHR47959:SF8">
    <property type="entry name" value="RNA HELICASE"/>
    <property type="match status" value="1"/>
</dbReference>
<dbReference type="Pfam" id="PF08147">
    <property type="entry name" value="DBP10CT"/>
    <property type="match status" value="1"/>
</dbReference>
<dbReference type="Pfam" id="PF00270">
    <property type="entry name" value="DEAD"/>
    <property type="match status" value="1"/>
</dbReference>
<dbReference type="Pfam" id="PF00271">
    <property type="entry name" value="Helicase_C"/>
    <property type="match status" value="1"/>
</dbReference>
<dbReference type="SMART" id="SM01123">
    <property type="entry name" value="DBP10CT"/>
    <property type="match status" value="1"/>
</dbReference>
<dbReference type="SMART" id="SM00487">
    <property type="entry name" value="DEXDc"/>
    <property type="match status" value="1"/>
</dbReference>
<dbReference type="SMART" id="SM00490">
    <property type="entry name" value="HELICc"/>
    <property type="match status" value="1"/>
</dbReference>
<dbReference type="SUPFAM" id="SSF52540">
    <property type="entry name" value="P-loop containing nucleoside triphosphate hydrolases"/>
    <property type="match status" value="2"/>
</dbReference>
<dbReference type="PROSITE" id="PS00039">
    <property type="entry name" value="DEAD_ATP_HELICASE"/>
    <property type="match status" value="1"/>
</dbReference>
<dbReference type="PROSITE" id="PS51192">
    <property type="entry name" value="HELICASE_ATP_BIND_1"/>
    <property type="match status" value="1"/>
</dbReference>
<dbReference type="PROSITE" id="PS51194">
    <property type="entry name" value="HELICASE_CTER"/>
    <property type="match status" value="1"/>
</dbReference>
<dbReference type="PROSITE" id="PS51195">
    <property type="entry name" value="Q_MOTIF"/>
    <property type="match status" value="1"/>
</dbReference>
<keyword id="KW-0067">ATP-binding</keyword>
<keyword id="KW-0347">Helicase</keyword>
<keyword id="KW-0378">Hydrolase</keyword>
<keyword id="KW-0547">Nucleotide-binding</keyword>
<keyword id="KW-0539">Nucleus</keyword>
<keyword id="KW-1185">Reference proteome</keyword>
<keyword id="KW-0690">Ribosome biogenesis</keyword>
<keyword id="KW-0694">RNA-binding</keyword>
<keyword id="KW-0698">rRNA processing</keyword>
<organism>
    <name type="scientific">Neosartorya fischeri (strain ATCC 1020 / DSM 3700 / CBS 544.65 / FGSC A1164 / JCM 1740 / NRRL 181 / WB 181)</name>
    <name type="common">Aspergillus fischerianus</name>
    <dbReference type="NCBI Taxonomy" id="331117"/>
    <lineage>
        <taxon>Eukaryota</taxon>
        <taxon>Fungi</taxon>
        <taxon>Dikarya</taxon>
        <taxon>Ascomycota</taxon>
        <taxon>Pezizomycotina</taxon>
        <taxon>Eurotiomycetes</taxon>
        <taxon>Eurotiomycetidae</taxon>
        <taxon>Eurotiales</taxon>
        <taxon>Aspergillaceae</taxon>
        <taxon>Aspergillus</taxon>
        <taxon>Aspergillus subgen. Fumigati</taxon>
    </lineage>
</organism>
<feature type="chain" id="PRO_0000281716" description="ATP-dependent RNA helicase dbp10">
    <location>
        <begin position="1"/>
        <end position="934"/>
    </location>
</feature>
<feature type="domain" description="Helicase ATP-binding" evidence="2">
    <location>
        <begin position="121"/>
        <end position="293"/>
    </location>
</feature>
<feature type="domain" description="Helicase C-terminal" evidence="3">
    <location>
        <begin position="361"/>
        <end position="515"/>
    </location>
</feature>
<feature type="region of interest" description="Disordered" evidence="4">
    <location>
        <begin position="1"/>
        <end position="57"/>
    </location>
</feature>
<feature type="region of interest" description="Disordered" evidence="4">
    <location>
        <begin position="334"/>
        <end position="358"/>
    </location>
</feature>
<feature type="region of interest" description="Disordered" evidence="4">
    <location>
        <begin position="639"/>
        <end position="688"/>
    </location>
</feature>
<feature type="region of interest" description="Disordered" evidence="4">
    <location>
        <begin position="854"/>
        <end position="934"/>
    </location>
</feature>
<feature type="short sequence motif" description="Q motif">
    <location>
        <begin position="90"/>
        <end position="118"/>
    </location>
</feature>
<feature type="short sequence motif" description="DEAD box">
    <location>
        <begin position="241"/>
        <end position="244"/>
    </location>
</feature>
<feature type="compositionally biased region" description="Polar residues" evidence="4">
    <location>
        <begin position="21"/>
        <end position="35"/>
    </location>
</feature>
<feature type="compositionally biased region" description="Basic and acidic residues" evidence="4">
    <location>
        <begin position="639"/>
        <end position="654"/>
    </location>
</feature>
<feature type="compositionally biased region" description="Acidic residues" evidence="4">
    <location>
        <begin position="669"/>
        <end position="684"/>
    </location>
</feature>
<feature type="compositionally biased region" description="Basic and acidic residues" evidence="4">
    <location>
        <begin position="865"/>
        <end position="893"/>
    </location>
</feature>
<feature type="compositionally biased region" description="Basic and acidic residues" evidence="4">
    <location>
        <begin position="903"/>
        <end position="915"/>
    </location>
</feature>
<feature type="compositionally biased region" description="Basic residues" evidence="4">
    <location>
        <begin position="916"/>
        <end position="934"/>
    </location>
</feature>
<feature type="binding site" evidence="2">
    <location>
        <begin position="134"/>
        <end position="141"/>
    </location>
    <ligand>
        <name>ATP</name>
        <dbReference type="ChEBI" id="CHEBI:30616"/>
    </ligand>
</feature>
<gene>
    <name type="primary">dbp10</name>
    <name type="ORF">NFIA_056820</name>
</gene>
<proteinExistence type="inferred from homology"/>
<name>DBP10_NEOFI</name>
<evidence type="ECO:0000250" key="1"/>
<evidence type="ECO:0000255" key="2">
    <source>
        <dbReference type="PROSITE-ProRule" id="PRU00541"/>
    </source>
</evidence>
<evidence type="ECO:0000255" key="3">
    <source>
        <dbReference type="PROSITE-ProRule" id="PRU00542"/>
    </source>
</evidence>
<evidence type="ECO:0000256" key="4">
    <source>
        <dbReference type="SAM" id="MobiDB-lite"/>
    </source>
</evidence>
<evidence type="ECO:0000305" key="5"/>
<reference key="1">
    <citation type="journal article" date="2008" name="PLoS Genet.">
        <title>Genomic islands in the pathogenic filamentous fungus Aspergillus fumigatus.</title>
        <authorList>
            <person name="Fedorova N.D."/>
            <person name="Khaldi N."/>
            <person name="Joardar V.S."/>
            <person name="Maiti R."/>
            <person name="Amedeo P."/>
            <person name="Anderson M.J."/>
            <person name="Crabtree J."/>
            <person name="Silva J.C."/>
            <person name="Badger J.H."/>
            <person name="Albarraq A."/>
            <person name="Angiuoli S."/>
            <person name="Bussey H."/>
            <person name="Bowyer P."/>
            <person name="Cotty P.J."/>
            <person name="Dyer P.S."/>
            <person name="Egan A."/>
            <person name="Galens K."/>
            <person name="Fraser-Liggett C.M."/>
            <person name="Haas B.J."/>
            <person name="Inman J.M."/>
            <person name="Kent R."/>
            <person name="Lemieux S."/>
            <person name="Malavazi I."/>
            <person name="Orvis J."/>
            <person name="Roemer T."/>
            <person name="Ronning C.M."/>
            <person name="Sundaram J.P."/>
            <person name="Sutton G."/>
            <person name="Turner G."/>
            <person name="Venter J.C."/>
            <person name="White O.R."/>
            <person name="Whitty B.R."/>
            <person name="Youngman P."/>
            <person name="Wolfe K.H."/>
            <person name="Goldman G.H."/>
            <person name="Wortman J.R."/>
            <person name="Jiang B."/>
            <person name="Denning D.W."/>
            <person name="Nierman W.C."/>
        </authorList>
    </citation>
    <scope>NUCLEOTIDE SEQUENCE [LARGE SCALE GENOMIC DNA]</scope>
    <source>
        <strain>ATCC 1020 / DSM 3700 / CBS 544.65 / FGSC A1164 / JCM 1740 / NRRL 181 / WB 181</strain>
    </source>
</reference>
<accession>A1DNG2</accession>
<protein>
    <recommendedName>
        <fullName>ATP-dependent RNA helicase dbp10</fullName>
        <ecNumber>3.6.4.13</ecNumber>
    </recommendedName>
</protein>
<sequence length="934" mass="103372">MPHRAASPAMSENEFDITGALFQNDSDSDNEQPSAKSKRQPPKKVPSQALDFLGDVNEDDDDDEAFIAEQQTSANRKASNLKGRTVKKGGGFQAMGLSANLLKAIARKGFSVPTPIQRKTIPVIMDDQDVVGMARTGSGKTAAFVIPMIEKLKSHSTKVGARGLILSPSRELALQTLKVVKELGRGTDLKSVLLVGGDSLEEQFAMMAGNPDIVIATPGRFLHLKVEMNLDLSSIRYVVFDEADRLFEMGFAAQLTEILHGLPANRQTLLFSATLPKSLVEFARAGLQEPTLVRLDTESKISPDLQNAFFSVKSSEKEGALLYILQEVIKMPTGPTEVSQQRKEEDASAKNWKNKKRKRAEMEKAVNMRESPTKHSTIVFAATKHHVDYLYSLLSEAGFAVSYVYGSLDQTARKIQVQNFRTGMTNILVVTDVAARGIDIPILANVINYDFPSQPKIFIHRVGRTARAGRKGWSYSLVRDADAPYLLDLQLFLGRRLVVGREFGDQVNFAEDVVTGSLPRDGLSQSCEWVTKVLDDNADLAAQRTVAAKGEKLYMRTRNSASLESAKRSKQVVSSDNWTSIHPLFQDETSNLEAEREKMLARIGGYRPPETIFEVNNRRMGKHENVDALDTIKRVRTTLESKKKRAQANEKSEFLEDASDDEKAANEAGENENEGAFSDEDDDVPTGVADNMSMASDSELEVTFSSYSQSKENKAKKASAASFQNPEYFMSYTPNNNSLVEDRAYGVHSGTNSNFAQASRSATMDLAGDDGGRGFGEARTLMRWDKRHKKYVARQNDEDGSKGTRLVRGESGAKIAASFRSGRFDAWKRGNRLGRLPRVGEAEAPNLTAGLNAAISGKRFRHRKEQAPKRADPLRGDYEKMKKKAELAKERAMSKAGGAAPRGKSELKNTDDIRIARKLKQKRREKNARPSRKK</sequence>
<comment type="function">
    <text evidence="1">ATP-binding RNA helicase involved in the biogenesis of 60S ribosomal subunits and is required for the normal formation of 25S and 5.8S rRNAs.</text>
</comment>
<comment type="catalytic activity">
    <reaction>
        <text>ATP + H2O = ADP + phosphate + H(+)</text>
        <dbReference type="Rhea" id="RHEA:13065"/>
        <dbReference type="ChEBI" id="CHEBI:15377"/>
        <dbReference type="ChEBI" id="CHEBI:15378"/>
        <dbReference type="ChEBI" id="CHEBI:30616"/>
        <dbReference type="ChEBI" id="CHEBI:43474"/>
        <dbReference type="ChEBI" id="CHEBI:456216"/>
        <dbReference type="EC" id="3.6.4.13"/>
    </reaction>
</comment>
<comment type="subcellular location">
    <subcellularLocation>
        <location evidence="1">Nucleus</location>
        <location evidence="1">Nucleolus</location>
    </subcellularLocation>
</comment>
<comment type="domain">
    <text>The Q motif is unique to and characteristic of the DEAD box family of RNA helicases and controls ATP binding and hydrolysis.</text>
</comment>
<comment type="similarity">
    <text evidence="5">Belongs to the DEAD box helicase family. DDX54/DBP10 subfamily.</text>
</comment>